<organism>
    <name type="scientific">Xenopus laevis</name>
    <name type="common">African clawed frog</name>
    <dbReference type="NCBI Taxonomy" id="8355"/>
    <lineage>
        <taxon>Eukaryota</taxon>
        <taxon>Metazoa</taxon>
        <taxon>Chordata</taxon>
        <taxon>Craniata</taxon>
        <taxon>Vertebrata</taxon>
        <taxon>Euteleostomi</taxon>
        <taxon>Amphibia</taxon>
        <taxon>Batrachia</taxon>
        <taxon>Anura</taxon>
        <taxon>Pipoidea</taxon>
        <taxon>Pipidae</taxon>
        <taxon>Xenopodinae</taxon>
        <taxon>Xenopus</taxon>
        <taxon>Xenopus</taxon>
    </lineage>
</organism>
<protein>
    <recommendedName>
        <fullName>Oocyte zinc finger protein XlCOF8.4</fullName>
    </recommendedName>
</protein>
<evidence type="ECO:0000255" key="1">
    <source>
        <dbReference type="PROSITE-ProRule" id="PRU00042"/>
    </source>
</evidence>
<evidence type="ECO:0000305" key="2"/>
<accession>P18753</accession>
<reference key="1">
    <citation type="journal article" date="1989" name="Proc. Natl. Acad. Sci. U.S.A.">
        <title>Evolutionary conserved modules associated with zinc fingers in Xenopus laevis.</title>
        <authorList>
            <person name="Knoechel W."/>
            <person name="Poeting A."/>
            <person name="Koester M."/>
            <person name="el Baradi T."/>
            <person name="Nietfeld W."/>
            <person name="Bouwmeester T."/>
            <person name="Pieler T."/>
        </authorList>
    </citation>
    <scope>NUCLEOTIDE SEQUENCE [MRNA] OF 1-272</scope>
</reference>
<reference key="2">
    <citation type="journal article" date="1989" name="J. Mol. Biol.">
        <title>Second-order repeats in Xenopus laevis finger proteins.</title>
        <authorList>
            <person name="Nietfeld W."/>
            <person name="El-Baradi T."/>
            <person name="Mentzel H."/>
            <person name="Pieler T."/>
            <person name="Koester M."/>
            <person name="Poeting A."/>
            <person name="Knoechel W."/>
        </authorList>
    </citation>
    <scope>NUCLEOTIDE SEQUENCE [MRNA] OF 245-780</scope>
</reference>
<comment type="function">
    <text>May be involved in transcriptional regulation.</text>
</comment>
<comment type="subcellular location">
    <subcellularLocation>
        <location evidence="2">Nucleus</location>
    </subcellularLocation>
</comment>
<comment type="similarity">
    <text evidence="2">Belongs to the krueppel C2H2-type zinc-finger protein family.</text>
</comment>
<dbReference type="EMBL" id="M25868">
    <property type="protein sequence ID" value="AAA50015.1"/>
    <property type="molecule type" value="mRNA"/>
</dbReference>
<dbReference type="PIR" id="C33282">
    <property type="entry name" value="C33282"/>
</dbReference>
<dbReference type="PIR" id="S06548">
    <property type="entry name" value="S06548"/>
</dbReference>
<dbReference type="SMR" id="P18753"/>
<dbReference type="AGR" id="Xenbase:XB-GENE-6486040"/>
<dbReference type="Xenbase" id="XB-GENE-6486040">
    <property type="gene designation" value="zscan29.L"/>
</dbReference>
<dbReference type="Proteomes" id="UP000186698">
    <property type="component" value="Unplaced"/>
</dbReference>
<dbReference type="GO" id="GO:0000785">
    <property type="term" value="C:chromatin"/>
    <property type="evidence" value="ECO:0007669"/>
    <property type="project" value="TreeGrafter"/>
</dbReference>
<dbReference type="GO" id="GO:0031519">
    <property type="term" value="C:PcG protein complex"/>
    <property type="evidence" value="ECO:0007669"/>
    <property type="project" value="TreeGrafter"/>
</dbReference>
<dbReference type="GO" id="GO:0005667">
    <property type="term" value="C:transcription regulator complex"/>
    <property type="evidence" value="ECO:0007669"/>
    <property type="project" value="TreeGrafter"/>
</dbReference>
<dbReference type="GO" id="GO:0000981">
    <property type="term" value="F:DNA-binding transcription factor activity, RNA polymerase II-specific"/>
    <property type="evidence" value="ECO:0000318"/>
    <property type="project" value="GO_Central"/>
</dbReference>
<dbReference type="GO" id="GO:0000978">
    <property type="term" value="F:RNA polymerase II cis-regulatory region sequence-specific DNA binding"/>
    <property type="evidence" value="ECO:0000318"/>
    <property type="project" value="GO_Central"/>
</dbReference>
<dbReference type="GO" id="GO:0008270">
    <property type="term" value="F:zinc ion binding"/>
    <property type="evidence" value="ECO:0007669"/>
    <property type="project" value="UniProtKB-KW"/>
</dbReference>
<dbReference type="GO" id="GO:0006357">
    <property type="term" value="P:regulation of transcription by RNA polymerase II"/>
    <property type="evidence" value="ECO:0000318"/>
    <property type="project" value="GO_Central"/>
</dbReference>
<dbReference type="FunFam" id="3.30.160.60:FF:001480">
    <property type="entry name" value="Si:cabz01071911.3"/>
    <property type="match status" value="1"/>
</dbReference>
<dbReference type="FunFam" id="3.30.160.60:FF:001155">
    <property type="entry name" value="Zinc finger 30C"/>
    <property type="match status" value="2"/>
</dbReference>
<dbReference type="FunFam" id="3.30.160.60:FF:001158">
    <property type="entry name" value="zinc finger protein 22"/>
    <property type="match status" value="3"/>
</dbReference>
<dbReference type="FunFam" id="3.30.160.60:FF:002343">
    <property type="entry name" value="Zinc finger protein 33A"/>
    <property type="match status" value="1"/>
</dbReference>
<dbReference type="FunFam" id="3.30.160.60:FF:001326">
    <property type="entry name" value="Zinc finger protein 432"/>
    <property type="match status" value="2"/>
</dbReference>
<dbReference type="FunFam" id="3.30.160.60:FF:002592">
    <property type="entry name" value="Zinc finger protein 527"/>
    <property type="match status" value="1"/>
</dbReference>
<dbReference type="FunFam" id="3.30.160.60:FF:000936">
    <property type="entry name" value="Zinc finger protein 577"/>
    <property type="match status" value="4"/>
</dbReference>
<dbReference type="FunFam" id="3.30.160.60:FF:002331">
    <property type="entry name" value="Zinc finger protein 672"/>
    <property type="match status" value="1"/>
</dbReference>
<dbReference type="Gene3D" id="3.30.160.60">
    <property type="entry name" value="Classic Zinc Finger"/>
    <property type="match status" value="15"/>
</dbReference>
<dbReference type="InterPro" id="IPR036236">
    <property type="entry name" value="Znf_C2H2_sf"/>
</dbReference>
<dbReference type="InterPro" id="IPR013087">
    <property type="entry name" value="Znf_C2H2_type"/>
</dbReference>
<dbReference type="PANTHER" id="PTHR14003:SF25">
    <property type="entry name" value="GASTRULA ZINC FINGER PROTEIN XLCGF57.1"/>
    <property type="match status" value="1"/>
</dbReference>
<dbReference type="PANTHER" id="PTHR14003">
    <property type="entry name" value="TRANSCRIPTIONAL REPRESSOR PROTEIN YY"/>
    <property type="match status" value="1"/>
</dbReference>
<dbReference type="Pfam" id="PF00096">
    <property type="entry name" value="zf-C2H2"/>
    <property type="match status" value="13"/>
</dbReference>
<dbReference type="SMART" id="SM00355">
    <property type="entry name" value="ZnF_C2H2"/>
    <property type="match status" value="15"/>
</dbReference>
<dbReference type="SUPFAM" id="SSF57667">
    <property type="entry name" value="beta-beta-alpha zinc fingers"/>
    <property type="match status" value="8"/>
</dbReference>
<dbReference type="PROSITE" id="PS00028">
    <property type="entry name" value="ZINC_FINGER_C2H2_1"/>
    <property type="match status" value="15"/>
</dbReference>
<dbReference type="PROSITE" id="PS50157">
    <property type="entry name" value="ZINC_FINGER_C2H2_2"/>
    <property type="match status" value="15"/>
</dbReference>
<name>ZO84_XENLA</name>
<proteinExistence type="evidence at transcript level"/>
<keyword id="KW-0238">DNA-binding</keyword>
<keyword id="KW-0479">Metal-binding</keyword>
<keyword id="KW-0539">Nucleus</keyword>
<keyword id="KW-1185">Reference proteome</keyword>
<keyword id="KW-0677">Repeat</keyword>
<keyword id="KW-0804">Transcription</keyword>
<keyword id="KW-0805">Transcription regulation</keyword>
<keyword id="KW-0862">Zinc</keyword>
<keyword id="KW-0863">Zinc-finger</keyword>
<sequence>ERMVNLTLEMIYLLTGEHYIPRKKSDDGGALHAPGSVIQKENNKNDKKILELMSNIIQLLTGEVAIRTGHVSIYFSLDEWDYIKGNKDLYEEGIKEEPQQPLPPDCEYEDKSDITADLGGTLYNYNEPSKIRAEGGDFCANGNPTNPEISPMKQPPPANGIKEEVASCDGGRQSDCSINPLTEQIQGTDIPTPIMGYNHLIIQAIKDNENTSPHESRFDRHHTTHTTEKQFSHHINLHNDLSIHAGKKPFPCSECGKCFAGSSELNVHRRTHTRVKPFSCSQCGKCFSNQTKLKYHHRTHTGEKPFSCSECGKCFSTPHVRARHQKTHTGEKPFPCSECGKCFARSSDVTVHRRTHTGEKPYSCSQCGKCFTRSSDLNVHRRTHTGEKPYSCSHCGKCFTTSSELNVHRRTHTGEKPYSCSECGKSFPTSSEFTSHWKTHMEEKPFSCVQCGKCFSKDTHLKYHYRTHTGEKPFSCFECGKCFTHNGSLKVHLKIHKREADFCSKGNLTNPEISPVEHYPPTNEIKEEATSWEEGNQSDYSINSLTEQIQGPYTPTPIMEYNHLIMQDNKYDVNACHSPLQETDVTKHALHKRDIDRRQRTQTQLKYDHRTNTGDKPLSCSECGKCFSTYHVLARHQKTHTGEKPFSCSECEKCYARSSDLNVHRRTHTGEKPYSCSECGKCFTRSSDFNVHRRTHTGEKPYSCSECGRCFPTSSVLTSHWRTHTGEKPFSCTECGKCFSRETYLKYHHRTHTGEKPFSCSECGKCFTCNSSLKVHFQLH</sequence>
<feature type="chain" id="PRO_0000047813" description="Oocyte zinc finger protein XlCOF8.4">
    <location>
        <begin position="1" status="less than"/>
        <end position="780" status="greater than"/>
    </location>
</feature>
<feature type="zinc finger region" description="C2H2-type 1" evidence="1">
    <location>
        <begin position="250"/>
        <end position="272"/>
    </location>
</feature>
<feature type="zinc finger region" description="C2H2-type 2" evidence="1">
    <location>
        <begin position="278"/>
        <end position="300"/>
    </location>
</feature>
<feature type="zinc finger region" description="C2H2-type 3" evidence="1">
    <location>
        <begin position="306"/>
        <end position="328"/>
    </location>
</feature>
<feature type="zinc finger region" description="C2H2-type 4" evidence="1">
    <location>
        <begin position="334"/>
        <end position="356"/>
    </location>
</feature>
<feature type="zinc finger region" description="C2H2-type 5" evidence="1">
    <location>
        <begin position="362"/>
        <end position="384"/>
    </location>
</feature>
<feature type="zinc finger region" description="C2H2-type 6" evidence="1">
    <location>
        <begin position="390"/>
        <end position="412"/>
    </location>
</feature>
<feature type="zinc finger region" description="C2H2-type 7" evidence="1">
    <location>
        <begin position="418"/>
        <end position="440"/>
    </location>
</feature>
<feature type="zinc finger region" description="C2H2-type 8" evidence="1">
    <location>
        <begin position="446"/>
        <end position="468"/>
    </location>
</feature>
<feature type="zinc finger region" description="C2H2-type 9" evidence="1">
    <location>
        <begin position="474"/>
        <end position="496"/>
    </location>
</feature>
<feature type="zinc finger region" description="C2H2-type 10" evidence="1">
    <location>
        <begin position="618"/>
        <end position="640"/>
    </location>
</feature>
<feature type="zinc finger region" description="C2H2-type 11" evidence="1">
    <location>
        <begin position="646"/>
        <end position="668"/>
    </location>
</feature>
<feature type="zinc finger region" description="C2H2-type 12" evidence="1">
    <location>
        <begin position="674"/>
        <end position="696"/>
    </location>
</feature>
<feature type="zinc finger region" description="C2H2-type 13" evidence="1">
    <location>
        <begin position="702"/>
        <end position="724"/>
    </location>
</feature>
<feature type="zinc finger region" description="C2H2-type 14" evidence="1">
    <location>
        <begin position="730"/>
        <end position="752"/>
    </location>
</feature>
<feature type="zinc finger region" description="C2H2-type 15" evidence="1">
    <location>
        <begin position="758"/>
        <end position="780"/>
    </location>
</feature>
<feature type="non-terminal residue">
    <location>
        <position position="1"/>
    </location>
</feature>
<feature type="non-terminal residue">
    <location>
        <position position="780"/>
    </location>
</feature>